<sequence length="287" mass="30858">MKRIFLLIATNMAILLVASIVMSILGVNTSTMGGLLVFAAIFGFGGAFISLAISKWMAKKTMGCEVITTPRDNTERWLVETVARQAEQAGIKMPEVAIYQSPELNAFATGPSKDNSLVAVSSGLLYGMNQDEIEAVLAHEVSHVANGDMVTLTLIQGVVNTFVIFAARVVAGIIDNFVSSNDEEGEGLGMFAYMAVVFVLDMLFGILASMIVAYFSRIREYRADEGAAKLAGKEKMIAALDRLRQGPETGAMPASMSALGINGKKSMAELMMSHPPLEKRIEALRAH</sequence>
<feature type="chain" id="PRO_1000077481" description="Protease HtpX">
    <location>
        <begin position="1"/>
        <end position="287"/>
    </location>
</feature>
<feature type="transmembrane region" description="Helical" evidence="1">
    <location>
        <begin position="4"/>
        <end position="24"/>
    </location>
</feature>
<feature type="transmembrane region" description="Helical" evidence="1">
    <location>
        <begin position="33"/>
        <end position="53"/>
    </location>
</feature>
<feature type="transmembrane region" description="Helical" evidence="1">
    <location>
        <begin position="154"/>
        <end position="174"/>
    </location>
</feature>
<feature type="transmembrane region" description="Helical" evidence="1">
    <location>
        <begin position="195"/>
        <end position="215"/>
    </location>
</feature>
<feature type="active site" evidence="1">
    <location>
        <position position="140"/>
    </location>
</feature>
<feature type="binding site" evidence="1">
    <location>
        <position position="139"/>
    </location>
    <ligand>
        <name>Zn(2+)</name>
        <dbReference type="ChEBI" id="CHEBI:29105"/>
        <note>catalytic</note>
    </ligand>
</feature>
<feature type="binding site" evidence="1">
    <location>
        <position position="143"/>
    </location>
    <ligand>
        <name>Zn(2+)</name>
        <dbReference type="ChEBI" id="CHEBI:29105"/>
        <note>catalytic</note>
    </ligand>
</feature>
<feature type="binding site" evidence="1">
    <location>
        <position position="220"/>
    </location>
    <ligand>
        <name>Zn(2+)</name>
        <dbReference type="ChEBI" id="CHEBI:29105"/>
        <note>catalytic</note>
    </ligand>
</feature>
<proteinExistence type="inferred from homology"/>
<accession>A8H3J1</accession>
<gene>
    <name evidence="1" type="primary">htpX</name>
    <name type="ordered locus">Spea_1805</name>
</gene>
<organism>
    <name type="scientific">Shewanella pealeana (strain ATCC 700345 / ANG-SQ1)</name>
    <dbReference type="NCBI Taxonomy" id="398579"/>
    <lineage>
        <taxon>Bacteria</taxon>
        <taxon>Pseudomonadati</taxon>
        <taxon>Pseudomonadota</taxon>
        <taxon>Gammaproteobacteria</taxon>
        <taxon>Alteromonadales</taxon>
        <taxon>Shewanellaceae</taxon>
        <taxon>Shewanella</taxon>
    </lineage>
</organism>
<keyword id="KW-0997">Cell inner membrane</keyword>
<keyword id="KW-1003">Cell membrane</keyword>
<keyword id="KW-0378">Hydrolase</keyword>
<keyword id="KW-0472">Membrane</keyword>
<keyword id="KW-0479">Metal-binding</keyword>
<keyword id="KW-0482">Metalloprotease</keyword>
<keyword id="KW-0645">Protease</keyword>
<keyword id="KW-1185">Reference proteome</keyword>
<keyword id="KW-0812">Transmembrane</keyword>
<keyword id="KW-1133">Transmembrane helix</keyword>
<keyword id="KW-0862">Zinc</keyword>
<evidence type="ECO:0000255" key="1">
    <source>
        <dbReference type="HAMAP-Rule" id="MF_00188"/>
    </source>
</evidence>
<dbReference type="EC" id="3.4.24.-" evidence="1"/>
<dbReference type="EMBL" id="CP000851">
    <property type="protein sequence ID" value="ABV87128.1"/>
    <property type="molecule type" value="Genomic_DNA"/>
</dbReference>
<dbReference type="RefSeq" id="WP_012155048.1">
    <property type="nucleotide sequence ID" value="NC_009901.1"/>
</dbReference>
<dbReference type="STRING" id="398579.Spea_1805"/>
<dbReference type="MEROPS" id="M48.002"/>
<dbReference type="KEGG" id="spl:Spea_1805"/>
<dbReference type="eggNOG" id="COG0501">
    <property type="taxonomic scope" value="Bacteria"/>
</dbReference>
<dbReference type="HOGENOM" id="CLU_042266_1_0_6"/>
<dbReference type="OrthoDB" id="15218at2"/>
<dbReference type="Proteomes" id="UP000002608">
    <property type="component" value="Chromosome"/>
</dbReference>
<dbReference type="GO" id="GO:0005886">
    <property type="term" value="C:plasma membrane"/>
    <property type="evidence" value="ECO:0007669"/>
    <property type="project" value="UniProtKB-SubCell"/>
</dbReference>
<dbReference type="GO" id="GO:0004222">
    <property type="term" value="F:metalloendopeptidase activity"/>
    <property type="evidence" value="ECO:0007669"/>
    <property type="project" value="UniProtKB-UniRule"/>
</dbReference>
<dbReference type="GO" id="GO:0008270">
    <property type="term" value="F:zinc ion binding"/>
    <property type="evidence" value="ECO:0007669"/>
    <property type="project" value="UniProtKB-UniRule"/>
</dbReference>
<dbReference type="GO" id="GO:0006508">
    <property type="term" value="P:proteolysis"/>
    <property type="evidence" value="ECO:0007669"/>
    <property type="project" value="UniProtKB-KW"/>
</dbReference>
<dbReference type="CDD" id="cd07335">
    <property type="entry name" value="M48B_HtpX_like"/>
    <property type="match status" value="1"/>
</dbReference>
<dbReference type="FunFam" id="3.30.2010.10:FF:000001">
    <property type="entry name" value="Protease HtpX"/>
    <property type="match status" value="1"/>
</dbReference>
<dbReference type="Gene3D" id="3.30.2010.10">
    <property type="entry name" value="Metalloproteases ('zincins'), catalytic domain"/>
    <property type="match status" value="1"/>
</dbReference>
<dbReference type="HAMAP" id="MF_00188">
    <property type="entry name" value="Pept_M48_protease_HtpX"/>
    <property type="match status" value="1"/>
</dbReference>
<dbReference type="InterPro" id="IPR050083">
    <property type="entry name" value="HtpX_protease"/>
</dbReference>
<dbReference type="InterPro" id="IPR022919">
    <property type="entry name" value="Pept_M48_protease_HtpX"/>
</dbReference>
<dbReference type="InterPro" id="IPR001915">
    <property type="entry name" value="Peptidase_M48"/>
</dbReference>
<dbReference type="NCBIfam" id="NF003965">
    <property type="entry name" value="PRK05457.1"/>
    <property type="match status" value="1"/>
</dbReference>
<dbReference type="PANTHER" id="PTHR43221">
    <property type="entry name" value="PROTEASE HTPX"/>
    <property type="match status" value="1"/>
</dbReference>
<dbReference type="PANTHER" id="PTHR43221:SF1">
    <property type="entry name" value="PROTEASE HTPX"/>
    <property type="match status" value="1"/>
</dbReference>
<dbReference type="Pfam" id="PF01435">
    <property type="entry name" value="Peptidase_M48"/>
    <property type="match status" value="1"/>
</dbReference>
<name>HTPX_SHEPA</name>
<protein>
    <recommendedName>
        <fullName evidence="1">Protease HtpX</fullName>
        <ecNumber evidence="1">3.4.24.-</ecNumber>
    </recommendedName>
    <alternativeName>
        <fullName evidence="1">Heat shock protein HtpX</fullName>
    </alternativeName>
</protein>
<comment type="cofactor">
    <cofactor evidence="1">
        <name>Zn(2+)</name>
        <dbReference type="ChEBI" id="CHEBI:29105"/>
    </cofactor>
    <text evidence="1">Binds 1 zinc ion per subunit.</text>
</comment>
<comment type="subcellular location">
    <subcellularLocation>
        <location evidence="1">Cell inner membrane</location>
        <topology evidence="1">Multi-pass membrane protein</topology>
    </subcellularLocation>
</comment>
<comment type="similarity">
    <text evidence="1">Belongs to the peptidase M48B family.</text>
</comment>
<reference key="1">
    <citation type="submission" date="2007-10" db="EMBL/GenBank/DDBJ databases">
        <title>Complete sequence of Shewanella pealeana ATCC 700345.</title>
        <authorList>
            <consortium name="US DOE Joint Genome Institute"/>
            <person name="Copeland A."/>
            <person name="Lucas S."/>
            <person name="Lapidus A."/>
            <person name="Barry K."/>
            <person name="Glavina del Rio T."/>
            <person name="Dalin E."/>
            <person name="Tice H."/>
            <person name="Pitluck S."/>
            <person name="Chertkov O."/>
            <person name="Brettin T."/>
            <person name="Bruce D."/>
            <person name="Detter J.C."/>
            <person name="Han C."/>
            <person name="Schmutz J."/>
            <person name="Larimer F."/>
            <person name="Land M."/>
            <person name="Hauser L."/>
            <person name="Kyrpides N."/>
            <person name="Kim E."/>
            <person name="Zhao J.-S.Z."/>
            <person name="Manno D."/>
            <person name="Hawari J."/>
            <person name="Richardson P."/>
        </authorList>
    </citation>
    <scope>NUCLEOTIDE SEQUENCE [LARGE SCALE GENOMIC DNA]</scope>
    <source>
        <strain>ATCC 700345 / ANG-SQ1</strain>
    </source>
</reference>